<feature type="chain" id="PRO_0000403351" description="Serine/threonine-protein kinase PBL35">
    <location>
        <begin position="1"/>
        <end position="490"/>
    </location>
</feature>
<feature type="domain" description="Protein kinase" evidence="4">
    <location>
        <begin position="136"/>
        <end position="422"/>
    </location>
</feature>
<feature type="region of interest" description="Disordered" evidence="6">
    <location>
        <begin position="1"/>
        <end position="39"/>
    </location>
</feature>
<feature type="region of interest" description="Disordered" evidence="6">
    <location>
        <begin position="80"/>
        <end position="103"/>
    </location>
</feature>
<feature type="region of interest" description="Disordered" evidence="6">
    <location>
        <begin position="442"/>
        <end position="490"/>
    </location>
</feature>
<feature type="coiled-coil region" evidence="3">
    <location>
        <begin position="14"/>
        <end position="39"/>
    </location>
</feature>
<feature type="compositionally biased region" description="Basic residues" evidence="6">
    <location>
        <begin position="23"/>
        <end position="33"/>
    </location>
</feature>
<feature type="compositionally biased region" description="Low complexity" evidence="6">
    <location>
        <begin position="94"/>
        <end position="103"/>
    </location>
</feature>
<feature type="compositionally biased region" description="Gly residues" evidence="6">
    <location>
        <begin position="444"/>
        <end position="454"/>
    </location>
</feature>
<feature type="compositionally biased region" description="Polar residues" evidence="6">
    <location>
        <begin position="463"/>
        <end position="473"/>
    </location>
</feature>
<feature type="active site" description="Proton acceptor" evidence="4 5">
    <location>
        <position position="269"/>
    </location>
</feature>
<feature type="binding site" evidence="4">
    <location>
        <begin position="142"/>
        <end position="150"/>
    </location>
    <ligand>
        <name>ATP</name>
        <dbReference type="ChEBI" id="CHEBI:30616"/>
    </ligand>
</feature>
<feature type="binding site" evidence="4">
    <location>
        <position position="174"/>
    </location>
    <ligand>
        <name>ATP</name>
        <dbReference type="ChEBI" id="CHEBI:30616"/>
    </ligand>
</feature>
<feature type="modified residue" description="Phosphotyrosine" evidence="1">
    <location>
        <position position="219"/>
    </location>
</feature>
<feature type="modified residue" description="Phosphoserine" evidence="1">
    <location>
        <position position="273"/>
    </location>
</feature>
<feature type="modified residue" description="Phosphoserine" evidence="1">
    <location>
        <position position="303"/>
    </location>
</feature>
<feature type="modified residue" description="Phosphothreonine" evidence="1">
    <location>
        <position position="304"/>
    </location>
</feature>
<feature type="modified residue" description="Phosphothreonine" evidence="1">
    <location>
        <position position="309"/>
    </location>
</feature>
<feature type="modified residue" description="Phosphotyrosine" evidence="1">
    <location>
        <position position="317"/>
    </location>
</feature>
<keyword id="KW-0067">ATP-binding</keyword>
<keyword id="KW-1003">Cell membrane</keyword>
<keyword id="KW-0175">Coiled coil</keyword>
<keyword id="KW-0418">Kinase</keyword>
<keyword id="KW-0449">Lipoprotein</keyword>
<keyword id="KW-0472">Membrane</keyword>
<keyword id="KW-0547">Nucleotide-binding</keyword>
<keyword id="KW-0597">Phosphoprotein</keyword>
<keyword id="KW-0611">Plant defense</keyword>
<keyword id="KW-1185">Reference proteome</keyword>
<keyword id="KW-0723">Serine/threonine-protein kinase</keyword>
<keyword id="KW-0808">Transferase</keyword>
<reference key="1">
    <citation type="journal article" date="2000" name="Nature">
        <title>Sequence and analysis of chromosome 3 of the plant Arabidopsis thaliana.</title>
        <authorList>
            <person name="Salanoubat M."/>
            <person name="Lemcke K."/>
            <person name="Rieger M."/>
            <person name="Ansorge W."/>
            <person name="Unseld M."/>
            <person name="Fartmann B."/>
            <person name="Valle G."/>
            <person name="Bloecker H."/>
            <person name="Perez-Alonso M."/>
            <person name="Obermaier B."/>
            <person name="Delseny M."/>
            <person name="Boutry M."/>
            <person name="Grivell L.A."/>
            <person name="Mache R."/>
            <person name="Puigdomenech P."/>
            <person name="De Simone V."/>
            <person name="Choisne N."/>
            <person name="Artiguenave F."/>
            <person name="Robert C."/>
            <person name="Brottier P."/>
            <person name="Wincker P."/>
            <person name="Cattolico L."/>
            <person name="Weissenbach J."/>
            <person name="Saurin W."/>
            <person name="Quetier F."/>
            <person name="Schaefer M."/>
            <person name="Mueller-Auer S."/>
            <person name="Gabel C."/>
            <person name="Fuchs M."/>
            <person name="Benes V."/>
            <person name="Wurmbach E."/>
            <person name="Drzonek H."/>
            <person name="Erfle H."/>
            <person name="Jordan N."/>
            <person name="Bangert S."/>
            <person name="Wiedelmann R."/>
            <person name="Kranz H."/>
            <person name="Voss H."/>
            <person name="Holland R."/>
            <person name="Brandt P."/>
            <person name="Nyakatura G."/>
            <person name="Vezzi A."/>
            <person name="D'Angelo M."/>
            <person name="Pallavicini A."/>
            <person name="Toppo S."/>
            <person name="Simionati B."/>
            <person name="Conrad A."/>
            <person name="Hornischer K."/>
            <person name="Kauer G."/>
            <person name="Loehnert T.-H."/>
            <person name="Nordsiek G."/>
            <person name="Reichelt J."/>
            <person name="Scharfe M."/>
            <person name="Schoen O."/>
            <person name="Bargues M."/>
            <person name="Terol J."/>
            <person name="Climent J."/>
            <person name="Navarro P."/>
            <person name="Collado C."/>
            <person name="Perez-Perez A."/>
            <person name="Ottenwaelder B."/>
            <person name="Duchemin D."/>
            <person name="Cooke R."/>
            <person name="Laudie M."/>
            <person name="Berger-Llauro C."/>
            <person name="Purnelle B."/>
            <person name="Masuy D."/>
            <person name="de Haan M."/>
            <person name="Maarse A.C."/>
            <person name="Alcaraz J.-P."/>
            <person name="Cottet A."/>
            <person name="Casacuberta E."/>
            <person name="Monfort A."/>
            <person name="Argiriou A."/>
            <person name="Flores M."/>
            <person name="Liguori R."/>
            <person name="Vitale D."/>
            <person name="Mannhaupt G."/>
            <person name="Haase D."/>
            <person name="Schoof H."/>
            <person name="Rudd S."/>
            <person name="Zaccaria P."/>
            <person name="Mewes H.-W."/>
            <person name="Mayer K.F.X."/>
            <person name="Kaul S."/>
            <person name="Town C.D."/>
            <person name="Koo H.L."/>
            <person name="Tallon L.J."/>
            <person name="Jenkins J."/>
            <person name="Rooney T."/>
            <person name="Rizzo M."/>
            <person name="Walts A."/>
            <person name="Utterback T."/>
            <person name="Fujii C.Y."/>
            <person name="Shea T.P."/>
            <person name="Creasy T.H."/>
            <person name="Haas B."/>
            <person name="Maiti R."/>
            <person name="Wu D."/>
            <person name="Peterson J."/>
            <person name="Van Aken S."/>
            <person name="Pai G."/>
            <person name="Militscher J."/>
            <person name="Sellers P."/>
            <person name="Gill J.E."/>
            <person name="Feldblyum T.V."/>
            <person name="Preuss D."/>
            <person name="Lin X."/>
            <person name="Nierman W.C."/>
            <person name="Salzberg S.L."/>
            <person name="White O."/>
            <person name="Venter J.C."/>
            <person name="Fraser C.M."/>
            <person name="Kaneko T."/>
            <person name="Nakamura Y."/>
            <person name="Sato S."/>
            <person name="Kato T."/>
            <person name="Asamizu E."/>
            <person name="Sasamoto S."/>
            <person name="Kimura T."/>
            <person name="Idesawa K."/>
            <person name="Kawashima K."/>
            <person name="Kishida Y."/>
            <person name="Kiyokawa C."/>
            <person name="Kohara M."/>
            <person name="Matsumoto M."/>
            <person name="Matsuno A."/>
            <person name="Muraki A."/>
            <person name="Nakayama S."/>
            <person name="Nakazaki N."/>
            <person name="Shinpo S."/>
            <person name="Takeuchi C."/>
            <person name="Wada T."/>
            <person name="Watanabe A."/>
            <person name="Yamada M."/>
            <person name="Yasuda M."/>
            <person name="Tabata S."/>
        </authorList>
    </citation>
    <scope>NUCLEOTIDE SEQUENCE [LARGE SCALE GENOMIC DNA]</scope>
    <source>
        <strain>cv. Columbia</strain>
    </source>
</reference>
<reference key="2">
    <citation type="journal article" date="2017" name="Plant J.">
        <title>Araport11: a complete reannotation of the Arabidopsis thaliana reference genome.</title>
        <authorList>
            <person name="Cheng C.Y."/>
            <person name="Krishnakumar V."/>
            <person name="Chan A.P."/>
            <person name="Thibaud-Nissen F."/>
            <person name="Schobel S."/>
            <person name="Town C.D."/>
        </authorList>
    </citation>
    <scope>GENOME REANNOTATION</scope>
    <source>
        <strain>cv. Columbia</strain>
    </source>
</reference>
<reference key="3">
    <citation type="journal article" date="2003" name="Science">
        <title>Empirical analysis of transcriptional activity in the Arabidopsis genome.</title>
        <authorList>
            <person name="Yamada K."/>
            <person name="Lim J."/>
            <person name="Dale J.M."/>
            <person name="Chen H."/>
            <person name="Shinn P."/>
            <person name="Palm C.J."/>
            <person name="Southwick A.M."/>
            <person name="Wu H.C."/>
            <person name="Kim C.J."/>
            <person name="Nguyen M."/>
            <person name="Pham P.K."/>
            <person name="Cheuk R.F."/>
            <person name="Karlin-Newmann G."/>
            <person name="Liu S.X."/>
            <person name="Lam B."/>
            <person name="Sakano H."/>
            <person name="Wu T."/>
            <person name="Yu G."/>
            <person name="Miranda M."/>
            <person name="Quach H.L."/>
            <person name="Tripp M."/>
            <person name="Chang C.H."/>
            <person name="Lee J.M."/>
            <person name="Toriumi M.J."/>
            <person name="Chan M.M."/>
            <person name="Tang C.C."/>
            <person name="Onodera C.S."/>
            <person name="Deng J.M."/>
            <person name="Akiyama K."/>
            <person name="Ansari Y."/>
            <person name="Arakawa T."/>
            <person name="Banh J."/>
            <person name="Banno F."/>
            <person name="Bowser L."/>
            <person name="Brooks S.Y."/>
            <person name="Carninci P."/>
            <person name="Chao Q."/>
            <person name="Choy N."/>
            <person name="Enju A."/>
            <person name="Goldsmith A.D."/>
            <person name="Gurjal M."/>
            <person name="Hansen N.F."/>
            <person name="Hayashizaki Y."/>
            <person name="Johnson-Hopson C."/>
            <person name="Hsuan V.W."/>
            <person name="Iida K."/>
            <person name="Karnes M."/>
            <person name="Khan S."/>
            <person name="Koesema E."/>
            <person name="Ishida J."/>
            <person name="Jiang P.X."/>
            <person name="Jones T."/>
            <person name="Kawai J."/>
            <person name="Kamiya A."/>
            <person name="Meyers C."/>
            <person name="Nakajima M."/>
            <person name="Narusaka M."/>
            <person name="Seki M."/>
            <person name="Sakurai T."/>
            <person name="Satou M."/>
            <person name="Tamse R."/>
            <person name="Vaysberg M."/>
            <person name="Wallender E.K."/>
            <person name="Wong C."/>
            <person name="Yamamura Y."/>
            <person name="Yuan S."/>
            <person name="Shinozaki K."/>
            <person name="Davis R.W."/>
            <person name="Theologis A."/>
            <person name="Ecker J.R."/>
        </authorList>
    </citation>
    <scope>NUCLEOTIDE SEQUENCE [LARGE SCALE MRNA]</scope>
    <source>
        <strain>cv. Columbia</strain>
    </source>
</reference>
<reference key="4">
    <citation type="submission" date="2002-03" db="EMBL/GenBank/DDBJ databases">
        <title>Full-length cDNA from Arabidopsis thaliana.</title>
        <authorList>
            <person name="Brover V.V."/>
            <person name="Troukhan M.E."/>
            <person name="Alexandrov N.A."/>
            <person name="Lu Y.-P."/>
            <person name="Flavell R.B."/>
            <person name="Feldmann K.A."/>
        </authorList>
    </citation>
    <scope>NUCLEOTIDE SEQUENCE [LARGE SCALE MRNA]</scope>
</reference>
<reference key="5">
    <citation type="submission" date="2006-09" db="EMBL/GenBank/DDBJ databases">
        <title>Arabidopsis ORF Clones.</title>
        <authorList>
            <person name="Bautista V.R."/>
            <person name="Kim C.J."/>
            <person name="Chen H."/>
            <person name="Quinitio C."/>
            <person name="Ecker J.R."/>
        </authorList>
    </citation>
    <scope>NUCLEOTIDE SEQUENCE [LARGE SCALE MRNA]</scope>
    <source>
        <strain>cv. Columbia</strain>
    </source>
</reference>
<reference key="6">
    <citation type="journal article" date="2018" name="Plant Physiol.">
        <title>Roles of receptor-like cytoplasmic kinase VII members in pattern-triggered immune signaling.</title>
        <authorList>
            <person name="Rao S."/>
            <person name="Zhou Z."/>
            <person name="Miao P."/>
            <person name="Bi G."/>
            <person name="Hu M."/>
            <person name="Wu Y."/>
            <person name="Feng F."/>
            <person name="Zhang X."/>
            <person name="Zhou J.M."/>
        </authorList>
    </citation>
    <scope>FUNCTION</scope>
    <scope>GENE FAMILY</scope>
    <scope>NOMENCLATURE</scope>
</reference>
<reference key="7">
    <citation type="journal article" date="2020" name="EMBO J.">
        <title>Tyrosine phosphorylation of the lectin receptor-like kinase LORE regulates plant immunity.</title>
        <authorList>
            <person name="Luo X."/>
            <person name="Wu W."/>
            <person name="Liang Y."/>
            <person name="Xu N."/>
            <person name="Wang Z."/>
            <person name="Zou H."/>
            <person name="Liu J."/>
        </authorList>
    </citation>
    <scope>FUNCTION</scope>
    <scope>INTERACTION WITH SD129</scope>
    <scope>SUBCELLULAR LOCATION</scope>
    <scope>PHOSPHORYLATION</scope>
</reference>
<comment type="function">
    <text evidence="7 8">Involved in chitin-triggered immune signaling and is required for reactive oxygen species (ROS) production (PubMed:29907700). Acts downstream of SD129 in defense signaling triggered by the pathogen-associated molecular pattern (PAMP) 3-OH-C10:0, a medium-chain 3-hydroxy fatty acid (PubMed:31922267).</text>
</comment>
<comment type="catalytic activity">
    <reaction evidence="2">
        <text>L-seryl-[protein] + ATP = O-phospho-L-seryl-[protein] + ADP + H(+)</text>
        <dbReference type="Rhea" id="RHEA:17989"/>
        <dbReference type="Rhea" id="RHEA-COMP:9863"/>
        <dbReference type="Rhea" id="RHEA-COMP:11604"/>
        <dbReference type="ChEBI" id="CHEBI:15378"/>
        <dbReference type="ChEBI" id="CHEBI:29999"/>
        <dbReference type="ChEBI" id="CHEBI:30616"/>
        <dbReference type="ChEBI" id="CHEBI:83421"/>
        <dbReference type="ChEBI" id="CHEBI:456216"/>
        <dbReference type="EC" id="2.7.11.1"/>
    </reaction>
    <physiologicalReaction direction="left-to-right" evidence="2">
        <dbReference type="Rhea" id="RHEA:17990"/>
    </physiologicalReaction>
</comment>
<comment type="catalytic activity">
    <reaction evidence="2">
        <text>L-threonyl-[protein] + ATP = O-phospho-L-threonyl-[protein] + ADP + H(+)</text>
        <dbReference type="Rhea" id="RHEA:46608"/>
        <dbReference type="Rhea" id="RHEA-COMP:11060"/>
        <dbReference type="Rhea" id="RHEA-COMP:11605"/>
        <dbReference type="ChEBI" id="CHEBI:15378"/>
        <dbReference type="ChEBI" id="CHEBI:30013"/>
        <dbReference type="ChEBI" id="CHEBI:30616"/>
        <dbReference type="ChEBI" id="CHEBI:61977"/>
        <dbReference type="ChEBI" id="CHEBI:456216"/>
        <dbReference type="EC" id="2.7.11.1"/>
    </reaction>
    <physiologicalReaction direction="left-to-right" evidence="2">
        <dbReference type="Rhea" id="RHEA:46609"/>
    </physiologicalReaction>
</comment>
<comment type="subunit">
    <text evidence="8">Interacts with SD129.</text>
</comment>
<comment type="subcellular location">
    <subcellularLocation>
        <location evidence="8">Cell membrane</location>
        <topology evidence="1">Lipid-anchor</topology>
    </subcellularLocation>
</comment>
<comment type="PTM">
    <text evidence="8">Phosphorylated by SD129 in response to the pathogen-associated molecular pattern (PAMP) 3-OH-C10:0, a medium-chain 3-hydroxy fatty acid.</text>
</comment>
<comment type="similarity">
    <text evidence="4">Belongs to the protein kinase superfamily. Ser/Thr protein kinase family.</text>
</comment>
<comment type="sequence caution" evidence="10">
    <conflict type="frameshift">
        <sequence resource="EMBL-CDS" id="AAL14379"/>
    </conflict>
</comment>
<comment type="sequence caution" evidence="10">
    <conflict type="erroneous initiation">
        <sequence resource="EMBL-CDS" id="AAM64595"/>
    </conflict>
    <text>Truncated N-terminus.</text>
</comment>
<organism>
    <name type="scientific">Arabidopsis thaliana</name>
    <name type="common">Mouse-ear cress</name>
    <dbReference type="NCBI Taxonomy" id="3702"/>
    <lineage>
        <taxon>Eukaryota</taxon>
        <taxon>Viridiplantae</taxon>
        <taxon>Streptophyta</taxon>
        <taxon>Embryophyta</taxon>
        <taxon>Tracheophyta</taxon>
        <taxon>Spermatophyta</taxon>
        <taxon>Magnoliopsida</taxon>
        <taxon>eudicotyledons</taxon>
        <taxon>Gunneridae</taxon>
        <taxon>Pentapetalae</taxon>
        <taxon>rosids</taxon>
        <taxon>malvids</taxon>
        <taxon>Brassicales</taxon>
        <taxon>Brassicaceae</taxon>
        <taxon>Camelineae</taxon>
        <taxon>Arabidopsis</taxon>
    </lineage>
</organism>
<dbReference type="EC" id="2.7.11.1" evidence="2"/>
<dbReference type="EMBL" id="AC008261">
    <property type="protein sequence ID" value="AAF26145.1"/>
    <property type="molecule type" value="Genomic_DNA"/>
</dbReference>
<dbReference type="EMBL" id="AC010676">
    <property type="protein sequence ID" value="AAF03496.1"/>
    <property type="molecule type" value="Genomic_DNA"/>
</dbReference>
<dbReference type="EMBL" id="CP002686">
    <property type="protein sequence ID" value="AEE73634.1"/>
    <property type="molecule type" value="Genomic_DNA"/>
</dbReference>
<dbReference type="EMBL" id="AY057584">
    <property type="protein sequence ID" value="AAL14379.1"/>
    <property type="status" value="ALT_FRAME"/>
    <property type="molecule type" value="mRNA"/>
</dbReference>
<dbReference type="EMBL" id="AY087034">
    <property type="protein sequence ID" value="AAM64595.1"/>
    <property type="status" value="ALT_INIT"/>
    <property type="molecule type" value="mRNA"/>
</dbReference>
<dbReference type="EMBL" id="BT028957">
    <property type="protein sequence ID" value="ABI54332.1"/>
    <property type="molecule type" value="mRNA"/>
</dbReference>
<dbReference type="RefSeq" id="NP_186779.1">
    <property type="nucleotide sequence ID" value="NM_110996.3"/>
</dbReference>
<dbReference type="SMR" id="Q9SRH7"/>
<dbReference type="BioGRID" id="6322">
    <property type="interactions" value="5"/>
</dbReference>
<dbReference type="FunCoup" id="Q9SRH7">
    <property type="interactions" value="4277"/>
</dbReference>
<dbReference type="IntAct" id="Q9SRH7">
    <property type="interactions" value="5"/>
</dbReference>
<dbReference type="STRING" id="3702.Q9SRH7"/>
<dbReference type="iPTMnet" id="Q9SRH7"/>
<dbReference type="PaxDb" id="3702-AT3G01300.1"/>
<dbReference type="ProteomicsDB" id="232362"/>
<dbReference type="EnsemblPlants" id="AT3G01300.1">
    <property type="protein sequence ID" value="AT3G01300.1"/>
    <property type="gene ID" value="AT3G01300"/>
</dbReference>
<dbReference type="GeneID" id="820989"/>
<dbReference type="Gramene" id="AT3G01300.1">
    <property type="protein sequence ID" value="AT3G01300.1"/>
    <property type="gene ID" value="AT3G01300"/>
</dbReference>
<dbReference type="KEGG" id="ath:AT3G01300"/>
<dbReference type="Araport" id="AT3G01300"/>
<dbReference type="TAIR" id="AT3G01300">
    <property type="gene designation" value="PBL35"/>
</dbReference>
<dbReference type="eggNOG" id="KOG1187">
    <property type="taxonomic scope" value="Eukaryota"/>
</dbReference>
<dbReference type="HOGENOM" id="CLU_000288_21_1_1"/>
<dbReference type="InParanoid" id="Q9SRH7"/>
<dbReference type="OMA" id="KVMENWQ"/>
<dbReference type="OrthoDB" id="4062651at2759"/>
<dbReference type="PhylomeDB" id="Q9SRH7"/>
<dbReference type="PRO" id="PR:Q9SRH7"/>
<dbReference type="Proteomes" id="UP000006548">
    <property type="component" value="Chromosome 3"/>
</dbReference>
<dbReference type="ExpressionAtlas" id="Q9SRH7">
    <property type="expression patterns" value="baseline and differential"/>
</dbReference>
<dbReference type="GO" id="GO:0005886">
    <property type="term" value="C:plasma membrane"/>
    <property type="evidence" value="ECO:0000314"/>
    <property type="project" value="UniProtKB"/>
</dbReference>
<dbReference type="GO" id="GO:0005524">
    <property type="term" value="F:ATP binding"/>
    <property type="evidence" value="ECO:0007669"/>
    <property type="project" value="UniProtKB-KW"/>
</dbReference>
<dbReference type="GO" id="GO:0106310">
    <property type="term" value="F:protein serine kinase activity"/>
    <property type="evidence" value="ECO:0007669"/>
    <property type="project" value="RHEA"/>
</dbReference>
<dbReference type="GO" id="GO:0004674">
    <property type="term" value="F:protein serine/threonine kinase activity"/>
    <property type="evidence" value="ECO:0007669"/>
    <property type="project" value="UniProtKB-KW"/>
</dbReference>
<dbReference type="GO" id="GO:0006952">
    <property type="term" value="P:defense response"/>
    <property type="evidence" value="ECO:0007669"/>
    <property type="project" value="UniProtKB-KW"/>
</dbReference>
<dbReference type="GO" id="GO:0031663">
    <property type="term" value="P:lipopolysaccharide-mediated signaling pathway"/>
    <property type="evidence" value="ECO:0000314"/>
    <property type="project" value="UniProtKB"/>
</dbReference>
<dbReference type="GO" id="GO:0002221">
    <property type="term" value="P:pattern recognition receptor signaling pathway"/>
    <property type="evidence" value="ECO:0000314"/>
    <property type="project" value="UniProtKB"/>
</dbReference>
<dbReference type="CDD" id="cd14066">
    <property type="entry name" value="STKc_IRAK"/>
    <property type="match status" value="1"/>
</dbReference>
<dbReference type="FunFam" id="1.10.510.10:FF:000258">
    <property type="entry name" value="Probable serine/threonine-protein kinase PBL8"/>
    <property type="match status" value="1"/>
</dbReference>
<dbReference type="FunFam" id="3.30.200.20:FF:000228">
    <property type="entry name" value="Serine/threonine-protein kinase BIK1"/>
    <property type="match status" value="1"/>
</dbReference>
<dbReference type="Gene3D" id="3.30.200.20">
    <property type="entry name" value="Phosphorylase Kinase, domain 1"/>
    <property type="match status" value="1"/>
</dbReference>
<dbReference type="Gene3D" id="1.10.510.10">
    <property type="entry name" value="Transferase(Phosphotransferase) domain 1"/>
    <property type="match status" value="1"/>
</dbReference>
<dbReference type="InterPro" id="IPR011009">
    <property type="entry name" value="Kinase-like_dom_sf"/>
</dbReference>
<dbReference type="InterPro" id="IPR050823">
    <property type="entry name" value="Plant_Ser_Thr_Prot_Kinase"/>
</dbReference>
<dbReference type="InterPro" id="IPR000719">
    <property type="entry name" value="Prot_kinase_dom"/>
</dbReference>
<dbReference type="InterPro" id="IPR017441">
    <property type="entry name" value="Protein_kinase_ATP_BS"/>
</dbReference>
<dbReference type="InterPro" id="IPR001245">
    <property type="entry name" value="Ser-Thr/Tyr_kinase_cat_dom"/>
</dbReference>
<dbReference type="InterPro" id="IPR008271">
    <property type="entry name" value="Ser/Thr_kinase_AS"/>
</dbReference>
<dbReference type="PANTHER" id="PTHR45621">
    <property type="entry name" value="OS01G0588500 PROTEIN-RELATED"/>
    <property type="match status" value="1"/>
</dbReference>
<dbReference type="Pfam" id="PF07714">
    <property type="entry name" value="PK_Tyr_Ser-Thr"/>
    <property type="match status" value="1"/>
</dbReference>
<dbReference type="PIRSF" id="PIRSF000615">
    <property type="entry name" value="TyrPK_CSF1-R"/>
    <property type="match status" value="1"/>
</dbReference>
<dbReference type="SUPFAM" id="SSF56112">
    <property type="entry name" value="Protein kinase-like (PK-like)"/>
    <property type="match status" value="1"/>
</dbReference>
<dbReference type="PROSITE" id="PS00107">
    <property type="entry name" value="PROTEIN_KINASE_ATP"/>
    <property type="match status" value="1"/>
</dbReference>
<dbReference type="PROSITE" id="PS50011">
    <property type="entry name" value="PROTEIN_KINASE_DOM"/>
    <property type="match status" value="1"/>
</dbReference>
<dbReference type="PROSITE" id="PS00108">
    <property type="entry name" value="PROTEIN_KINASE_ST"/>
    <property type="match status" value="1"/>
</dbReference>
<name>PBL35_ARATH</name>
<sequence length="490" mass="54510">MGFDSVKVMENWQSKTSNENEKKKKKRRRKKNNNVRNSEHYEEEANGCWVKFRYIVCCASSTSDVETSLTLSTSTVGSQSAIVQSNDQPVGPVSSTTTTSNAESSLSTPIISEELNIYSHLKKFSFIDLKLATRNFRPESLLGEGGFGCVFKGWVEENGTAPVKPGTGLTVAVKTLNPDGLQGHKEWLAEINYLGNLLHPNLVKLVGYCIEDDQRLLVYEFMPRGSLENHLFRRSLPLPWSIRMKIALGAAKGLSFLHEEALKPVIYRDFKTSNILLDGEYNAKLSDFGLAKDAPDEGKTHVSTRVMGTYGYAAPEYVMTGHLTSKSDVYSFGVVLLEMLTGRRSMDKNRPNGEHNLVEWARPHLLDKRRFYRLLDPRLEGHFSVKGAQKVTQLAAQCLSRDSKIRPKMSEVVEVLKPLPHLKDMASASYYFQTMQAERLKAGSGSGSGRGFGSRNGQPVFRTLSSPHGQAGSSPYRHQIPSPKPKGATT</sequence>
<evidence type="ECO:0000250" key="1">
    <source>
        <dbReference type="UniProtKB" id="O48814"/>
    </source>
</evidence>
<evidence type="ECO:0000250" key="2">
    <source>
        <dbReference type="UniProtKB" id="Q9LFP7"/>
    </source>
</evidence>
<evidence type="ECO:0000255" key="3"/>
<evidence type="ECO:0000255" key="4">
    <source>
        <dbReference type="PROSITE-ProRule" id="PRU00159"/>
    </source>
</evidence>
<evidence type="ECO:0000255" key="5">
    <source>
        <dbReference type="PROSITE-ProRule" id="PRU10027"/>
    </source>
</evidence>
<evidence type="ECO:0000256" key="6">
    <source>
        <dbReference type="SAM" id="MobiDB-lite"/>
    </source>
</evidence>
<evidence type="ECO:0000269" key="7">
    <source>
    </source>
</evidence>
<evidence type="ECO:0000269" key="8">
    <source>
    </source>
</evidence>
<evidence type="ECO:0000303" key="9">
    <source>
    </source>
</evidence>
<evidence type="ECO:0000305" key="10"/>
<evidence type="ECO:0000312" key="11">
    <source>
        <dbReference type="EMBL" id="AAF03496.1"/>
    </source>
</evidence>
<evidence type="ECO:0000312" key="12">
    <source>
        <dbReference type="EMBL" id="AAF26145.1"/>
    </source>
</evidence>
<evidence type="ECO:0000312" key="13">
    <source>
        <dbReference type="EMBL" id="AEE73634.1"/>
    </source>
</evidence>
<proteinExistence type="evidence at protein level"/>
<accession>Q9SRH7</accession>
<accession>Q8LBS0</accession>
<accession>Q93ZF1</accession>
<protein>
    <recommendedName>
        <fullName evidence="9">Serine/threonine-protein kinase PBL35</fullName>
        <ecNumber evidence="2">2.7.11.1</ecNumber>
    </recommendedName>
    <alternativeName>
        <fullName evidence="9">PBS1-like protein 35</fullName>
    </alternativeName>
    <alternativeName>
        <fullName evidence="9">Receptor-like cytoplasmic kinase PBL35</fullName>
    </alternativeName>
</protein>
<gene>
    <name evidence="9" type="primary">PBL35</name>
    <name evidence="13" type="ordered locus">At3g01300</name>
    <name evidence="11" type="ORF">T22N4.7</name>
    <name evidence="12" type="ORF">T4P13.2</name>
</gene>